<gene>
    <name evidence="1" type="primary">mnmG</name>
    <name evidence="1" type="synonym">gidA</name>
    <name type="ordered locus">Fphi_0099</name>
</gene>
<accession>B0TY78</accession>
<keyword id="KW-0963">Cytoplasm</keyword>
<keyword id="KW-0274">FAD</keyword>
<keyword id="KW-0285">Flavoprotein</keyword>
<keyword id="KW-0520">NAD</keyword>
<keyword id="KW-0819">tRNA processing</keyword>
<dbReference type="EMBL" id="CP000937">
    <property type="protein sequence ID" value="ABZ86320.1"/>
    <property type="molecule type" value="Genomic_DNA"/>
</dbReference>
<dbReference type="SMR" id="B0TY78"/>
<dbReference type="KEGG" id="fph:Fphi_0099"/>
<dbReference type="eggNOG" id="COG0445">
    <property type="taxonomic scope" value="Bacteria"/>
</dbReference>
<dbReference type="HOGENOM" id="CLU_007831_2_2_6"/>
<dbReference type="GO" id="GO:0005829">
    <property type="term" value="C:cytosol"/>
    <property type="evidence" value="ECO:0007669"/>
    <property type="project" value="TreeGrafter"/>
</dbReference>
<dbReference type="GO" id="GO:0050660">
    <property type="term" value="F:flavin adenine dinucleotide binding"/>
    <property type="evidence" value="ECO:0007669"/>
    <property type="project" value="UniProtKB-UniRule"/>
</dbReference>
<dbReference type="GO" id="GO:0030488">
    <property type="term" value="P:tRNA methylation"/>
    <property type="evidence" value="ECO:0007669"/>
    <property type="project" value="TreeGrafter"/>
</dbReference>
<dbReference type="GO" id="GO:0002098">
    <property type="term" value="P:tRNA wobble uridine modification"/>
    <property type="evidence" value="ECO:0007669"/>
    <property type="project" value="InterPro"/>
</dbReference>
<dbReference type="FunFam" id="1.10.10.1800:FF:000001">
    <property type="entry name" value="tRNA uridine 5-carboxymethylaminomethyl modification enzyme MnmG"/>
    <property type="match status" value="1"/>
</dbReference>
<dbReference type="FunFam" id="1.10.150.570:FF:000001">
    <property type="entry name" value="tRNA uridine 5-carboxymethylaminomethyl modification enzyme MnmG"/>
    <property type="match status" value="1"/>
</dbReference>
<dbReference type="FunFam" id="3.50.50.60:FF:000002">
    <property type="entry name" value="tRNA uridine 5-carboxymethylaminomethyl modification enzyme MnmG"/>
    <property type="match status" value="1"/>
</dbReference>
<dbReference type="FunFam" id="3.50.50.60:FF:000010">
    <property type="entry name" value="tRNA uridine 5-carboxymethylaminomethyl modification enzyme MnmG"/>
    <property type="match status" value="1"/>
</dbReference>
<dbReference type="Gene3D" id="3.50.50.60">
    <property type="entry name" value="FAD/NAD(P)-binding domain"/>
    <property type="match status" value="2"/>
</dbReference>
<dbReference type="Gene3D" id="1.10.150.570">
    <property type="entry name" value="GidA associated domain, C-terminal subdomain"/>
    <property type="match status" value="1"/>
</dbReference>
<dbReference type="Gene3D" id="1.10.10.1800">
    <property type="entry name" value="tRNA uridine 5-carboxymethylaminomethyl modification enzyme MnmG/GidA"/>
    <property type="match status" value="1"/>
</dbReference>
<dbReference type="HAMAP" id="MF_00129">
    <property type="entry name" value="MnmG_GidA"/>
    <property type="match status" value="1"/>
</dbReference>
<dbReference type="InterPro" id="IPR036188">
    <property type="entry name" value="FAD/NAD-bd_sf"/>
</dbReference>
<dbReference type="InterPro" id="IPR049312">
    <property type="entry name" value="GIDA_C_N"/>
</dbReference>
<dbReference type="InterPro" id="IPR004416">
    <property type="entry name" value="MnmG"/>
</dbReference>
<dbReference type="InterPro" id="IPR002218">
    <property type="entry name" value="MnmG-rel"/>
</dbReference>
<dbReference type="InterPro" id="IPR020595">
    <property type="entry name" value="MnmG-rel_CS"/>
</dbReference>
<dbReference type="InterPro" id="IPR026904">
    <property type="entry name" value="MnmG_C"/>
</dbReference>
<dbReference type="InterPro" id="IPR047001">
    <property type="entry name" value="MnmG_C_subdom"/>
</dbReference>
<dbReference type="InterPro" id="IPR044920">
    <property type="entry name" value="MnmG_C_subdom_sf"/>
</dbReference>
<dbReference type="InterPro" id="IPR040131">
    <property type="entry name" value="MnmG_N"/>
</dbReference>
<dbReference type="NCBIfam" id="TIGR00136">
    <property type="entry name" value="mnmG_gidA"/>
    <property type="match status" value="1"/>
</dbReference>
<dbReference type="PANTHER" id="PTHR11806">
    <property type="entry name" value="GLUCOSE INHIBITED DIVISION PROTEIN A"/>
    <property type="match status" value="1"/>
</dbReference>
<dbReference type="PANTHER" id="PTHR11806:SF0">
    <property type="entry name" value="PROTEIN MTO1 HOMOLOG, MITOCHONDRIAL"/>
    <property type="match status" value="1"/>
</dbReference>
<dbReference type="Pfam" id="PF01134">
    <property type="entry name" value="GIDA"/>
    <property type="match status" value="1"/>
</dbReference>
<dbReference type="Pfam" id="PF21680">
    <property type="entry name" value="GIDA_C_1st"/>
    <property type="match status" value="1"/>
</dbReference>
<dbReference type="Pfam" id="PF13932">
    <property type="entry name" value="SAM_GIDA_C"/>
    <property type="match status" value="1"/>
</dbReference>
<dbReference type="SMART" id="SM01228">
    <property type="entry name" value="GIDA_assoc_3"/>
    <property type="match status" value="1"/>
</dbReference>
<dbReference type="SUPFAM" id="SSF51905">
    <property type="entry name" value="FAD/NAD(P)-binding domain"/>
    <property type="match status" value="1"/>
</dbReference>
<dbReference type="PROSITE" id="PS01280">
    <property type="entry name" value="GIDA_1"/>
    <property type="match status" value="1"/>
</dbReference>
<dbReference type="PROSITE" id="PS01281">
    <property type="entry name" value="GIDA_2"/>
    <property type="match status" value="1"/>
</dbReference>
<name>MNMG_FRAP2</name>
<comment type="function">
    <text evidence="1">NAD-binding protein involved in the addition of a carboxymethylaminomethyl (cmnm) group at the wobble position (U34) of certain tRNAs, forming tRNA-cmnm(5)s(2)U34.</text>
</comment>
<comment type="cofactor">
    <cofactor evidence="1">
        <name>FAD</name>
        <dbReference type="ChEBI" id="CHEBI:57692"/>
    </cofactor>
</comment>
<comment type="subunit">
    <text evidence="1">Homodimer. Heterotetramer of two MnmE and two MnmG subunits.</text>
</comment>
<comment type="subcellular location">
    <subcellularLocation>
        <location evidence="1">Cytoplasm</location>
    </subcellularLocation>
</comment>
<comment type="similarity">
    <text evidence="1">Belongs to the MnmG family.</text>
</comment>
<protein>
    <recommendedName>
        <fullName evidence="1">tRNA uridine 5-carboxymethylaminomethyl modification enzyme MnmG</fullName>
    </recommendedName>
    <alternativeName>
        <fullName evidence="1">Glucose-inhibited division protein A</fullName>
    </alternativeName>
</protein>
<reference key="1">
    <citation type="submission" date="2007-12" db="EMBL/GenBank/DDBJ databases">
        <title>Complete sequence of chromosome of Francisella philomiragia subsp. philomiragia ATCC 25017.</title>
        <authorList>
            <consortium name="US DOE Joint Genome Institute"/>
            <person name="Copeland A."/>
            <person name="Lucas S."/>
            <person name="Lapidus A."/>
            <person name="Barry K."/>
            <person name="Detter J.C."/>
            <person name="Glavina del Rio T."/>
            <person name="Hammon N."/>
            <person name="Israni S."/>
            <person name="Dalin E."/>
            <person name="Tice H."/>
            <person name="Pitluck S."/>
            <person name="Chain P."/>
            <person name="Malfatti S."/>
            <person name="Shin M."/>
            <person name="Vergez L."/>
            <person name="Schmutz J."/>
            <person name="Larimer F."/>
            <person name="Land M."/>
            <person name="Hauser L."/>
            <person name="Richardson P."/>
        </authorList>
    </citation>
    <scope>NUCLEOTIDE SEQUENCE [LARGE SCALE GENOMIC DNA]</scope>
    <source>
        <strain>ATCC 25017 / CCUG 19701 / FSC 153 / O#319-036</strain>
    </source>
</reference>
<organism>
    <name type="scientific">Francisella philomiragia subsp. philomiragia (strain ATCC 25017 / CCUG 19701 / FSC 153 / O#319-036)</name>
    <dbReference type="NCBI Taxonomy" id="484022"/>
    <lineage>
        <taxon>Bacteria</taxon>
        <taxon>Pseudomonadati</taxon>
        <taxon>Pseudomonadota</taxon>
        <taxon>Gammaproteobacteria</taxon>
        <taxon>Thiotrichales</taxon>
        <taxon>Francisellaceae</taxon>
        <taxon>Francisella</taxon>
    </lineage>
</organism>
<proteinExistence type="inferred from homology"/>
<feature type="chain" id="PRO_1000076318" description="tRNA uridine 5-carboxymethylaminomethyl modification enzyme MnmG">
    <location>
        <begin position="1"/>
        <end position="627"/>
    </location>
</feature>
<feature type="binding site" evidence="1">
    <location>
        <begin position="13"/>
        <end position="18"/>
    </location>
    <ligand>
        <name>FAD</name>
        <dbReference type="ChEBI" id="CHEBI:57692"/>
    </ligand>
</feature>
<feature type="binding site" evidence="1">
    <location>
        <position position="125"/>
    </location>
    <ligand>
        <name>FAD</name>
        <dbReference type="ChEBI" id="CHEBI:57692"/>
    </ligand>
</feature>
<feature type="binding site" evidence="1">
    <location>
        <position position="180"/>
    </location>
    <ligand>
        <name>FAD</name>
        <dbReference type="ChEBI" id="CHEBI:57692"/>
    </ligand>
</feature>
<feature type="binding site" evidence="1">
    <location>
        <begin position="274"/>
        <end position="288"/>
    </location>
    <ligand>
        <name>NAD(+)</name>
        <dbReference type="ChEBI" id="CHEBI:57540"/>
    </ligand>
</feature>
<feature type="binding site" evidence="1">
    <location>
        <position position="371"/>
    </location>
    <ligand>
        <name>FAD</name>
        <dbReference type="ChEBI" id="CHEBI:57692"/>
    </ligand>
</feature>
<sequence>MIYNNTYDVIVVGGGHAGVEAAAASARIGAKTLLLTHNIDTIGQMSCNPAIGGIGKGHLVKEIDAMGGIMAKAIDMAGIQFRILNSRKGPAVRATRAQADRVLYKKAINSLLNDQENLDIFQDSVDDLVVENDTVCGVITKTGIIFKSKKVVLTVGTFLGGKIHIGQVSKEGGRAGDQPSNALAARLRALPFRVDRLKTGTPPRIDSRSVDFSVMDVQHGDTPTPYFSFFSKGKIEHPRQIPCYITYTNSKTHEIITNNLDKSAMYSGLIEGIGPRYCPSIEDKVVRFAEKDRHQIFVEPEGLNSIELYPNGLSTSLPFEVQCEYIRSIKGFENAFIMRPGYAIEYDFFDPRDLKPTLETKHIKNLFFAGQINGTTGYEEAGAQGLVAGINAAISIDSDKSWYPTRSNSYMGVLIDDLITKGTKEPYRMFTSRAEYRLILREDNADLRLSDKACELGLLNKQDQEIFINKKTAIDENIAIMKNTWIGPQTQKARDLEKFLDKKMTRESTLFDLLKRPELDYKKLQQIPDTNLKLEDESVIEQIEISAKYSGYIERQSKDIAKISTLESKTIPESFDYSQVKGLSNEVLQKLSEQKPTTLGEASRIPGVTPAAVSLLTIYMKKTGFIK</sequence>
<evidence type="ECO:0000255" key="1">
    <source>
        <dbReference type="HAMAP-Rule" id="MF_00129"/>
    </source>
</evidence>